<keyword id="KW-0648">Protein biosynthesis</keyword>
<keyword id="KW-0808">Transferase</keyword>
<evidence type="ECO:0000255" key="1">
    <source>
        <dbReference type="HAMAP-Rule" id="MF_00182"/>
    </source>
</evidence>
<sequence>MRIIFMGSPEFSVVALSSILNNTEHKIVGVYTRVPKPAGRGKVLTKTPIHTVAEMHGLTVYTPKSLKRIEEQDRIKELNPDVIVVVAYGLIIPKEVLSIPKYGCINIHPSLLPRWRGAAPIHYAILHGDSQTGVTIMQMNEGWDEGDILLQKKLSIDEQDNIETLSSKLSNLGGAMLVEVLNNIDNLVPVAQNEDNATYTNKIEDFHIDINETAEVACRRIRALYPRAFVFFNGKRLRILQASYYYDDNISSLKPSSILNSGMHIKCKGNTILVPLVVQMEGKTLCSIKDFVCGYNVKDYSIT</sequence>
<gene>
    <name evidence="1" type="primary">fmt</name>
    <name type="ordered locus">Erum2030</name>
    <name type="ordered locus">ERWE_CDS_02050</name>
</gene>
<dbReference type="EC" id="2.1.2.9" evidence="1"/>
<dbReference type="EMBL" id="CR767821">
    <property type="protein sequence ID" value="CAH57921.1"/>
    <property type="molecule type" value="Genomic_DNA"/>
</dbReference>
<dbReference type="EMBL" id="CR925678">
    <property type="protein sequence ID" value="CAI26699.1"/>
    <property type="molecule type" value="Genomic_DNA"/>
</dbReference>
<dbReference type="RefSeq" id="WP_011154889.1">
    <property type="nucleotide sequence ID" value="NC_005295.2"/>
</dbReference>
<dbReference type="SMR" id="Q5HBX2"/>
<dbReference type="GeneID" id="33057715"/>
<dbReference type="KEGG" id="eru:Erum2030"/>
<dbReference type="KEGG" id="erw:ERWE_CDS_02050"/>
<dbReference type="eggNOG" id="COG0223">
    <property type="taxonomic scope" value="Bacteria"/>
</dbReference>
<dbReference type="HOGENOM" id="CLU_033347_1_1_5"/>
<dbReference type="Proteomes" id="UP000001021">
    <property type="component" value="Chromosome"/>
</dbReference>
<dbReference type="GO" id="GO:0005829">
    <property type="term" value="C:cytosol"/>
    <property type="evidence" value="ECO:0007669"/>
    <property type="project" value="TreeGrafter"/>
</dbReference>
<dbReference type="GO" id="GO:0004479">
    <property type="term" value="F:methionyl-tRNA formyltransferase activity"/>
    <property type="evidence" value="ECO:0007669"/>
    <property type="project" value="UniProtKB-UniRule"/>
</dbReference>
<dbReference type="CDD" id="cd08646">
    <property type="entry name" value="FMT_core_Met-tRNA-FMT_N"/>
    <property type="match status" value="1"/>
</dbReference>
<dbReference type="CDD" id="cd08704">
    <property type="entry name" value="Met_tRNA_FMT_C"/>
    <property type="match status" value="1"/>
</dbReference>
<dbReference type="Gene3D" id="3.40.50.12230">
    <property type="match status" value="1"/>
</dbReference>
<dbReference type="HAMAP" id="MF_00182">
    <property type="entry name" value="Formyl_trans"/>
    <property type="match status" value="1"/>
</dbReference>
<dbReference type="InterPro" id="IPR005794">
    <property type="entry name" value="Fmt"/>
</dbReference>
<dbReference type="InterPro" id="IPR005793">
    <property type="entry name" value="Formyl_trans_C"/>
</dbReference>
<dbReference type="InterPro" id="IPR002376">
    <property type="entry name" value="Formyl_transf_N"/>
</dbReference>
<dbReference type="InterPro" id="IPR036477">
    <property type="entry name" value="Formyl_transf_N_sf"/>
</dbReference>
<dbReference type="InterPro" id="IPR011034">
    <property type="entry name" value="Formyl_transferase-like_C_sf"/>
</dbReference>
<dbReference type="InterPro" id="IPR044135">
    <property type="entry name" value="Met-tRNA-FMT_C"/>
</dbReference>
<dbReference type="InterPro" id="IPR041711">
    <property type="entry name" value="Met-tRNA-FMT_N"/>
</dbReference>
<dbReference type="NCBIfam" id="TIGR00460">
    <property type="entry name" value="fmt"/>
    <property type="match status" value="1"/>
</dbReference>
<dbReference type="PANTHER" id="PTHR11138">
    <property type="entry name" value="METHIONYL-TRNA FORMYLTRANSFERASE"/>
    <property type="match status" value="1"/>
</dbReference>
<dbReference type="PANTHER" id="PTHR11138:SF5">
    <property type="entry name" value="METHIONYL-TRNA FORMYLTRANSFERASE, MITOCHONDRIAL"/>
    <property type="match status" value="1"/>
</dbReference>
<dbReference type="Pfam" id="PF02911">
    <property type="entry name" value="Formyl_trans_C"/>
    <property type="match status" value="1"/>
</dbReference>
<dbReference type="Pfam" id="PF00551">
    <property type="entry name" value="Formyl_trans_N"/>
    <property type="match status" value="1"/>
</dbReference>
<dbReference type="SUPFAM" id="SSF50486">
    <property type="entry name" value="FMT C-terminal domain-like"/>
    <property type="match status" value="1"/>
</dbReference>
<dbReference type="SUPFAM" id="SSF53328">
    <property type="entry name" value="Formyltransferase"/>
    <property type="match status" value="1"/>
</dbReference>
<reference key="1">
    <citation type="journal article" date="2005" name="Proc. Natl. Acad. Sci. U.S.A.">
        <title>The genome of the heartwater agent Ehrlichia ruminantium contains multiple tandem repeats of actively variable copy number.</title>
        <authorList>
            <person name="Collins N.E."/>
            <person name="Liebenberg J."/>
            <person name="de Villiers E.P."/>
            <person name="Brayton K.A."/>
            <person name="Louw E."/>
            <person name="Pretorius A."/>
            <person name="Faber F.E."/>
            <person name="van Heerden H."/>
            <person name="Josemans A."/>
            <person name="van Kleef M."/>
            <person name="Steyn H.C."/>
            <person name="van Strijp M.F."/>
            <person name="Zweygarth E."/>
            <person name="Jongejan F."/>
            <person name="Maillard J.C."/>
            <person name="Berthier D."/>
            <person name="Botha M."/>
            <person name="Joubert F."/>
            <person name="Corton C.H."/>
            <person name="Thomson N.R."/>
            <person name="Allsopp M.T."/>
            <person name="Allsopp B.A."/>
        </authorList>
    </citation>
    <scope>NUCLEOTIDE SEQUENCE [LARGE SCALE GENOMIC DNA]</scope>
    <source>
        <strain>Welgevonden</strain>
    </source>
</reference>
<reference key="2">
    <citation type="journal article" date="2006" name="J. Bacteriol.">
        <title>Comparative genomic analysis of three strains of Ehrlichia ruminantium reveals an active process of genome size plasticity.</title>
        <authorList>
            <person name="Frutos R."/>
            <person name="Viari A."/>
            <person name="Ferraz C."/>
            <person name="Morgat A."/>
            <person name="Eychenie S."/>
            <person name="Kandassamy Y."/>
            <person name="Chantal I."/>
            <person name="Bensaid A."/>
            <person name="Coissac E."/>
            <person name="Vachiery N."/>
            <person name="Demaille J."/>
            <person name="Martinez D."/>
        </authorList>
    </citation>
    <scope>NUCLEOTIDE SEQUENCE [LARGE SCALE GENOMIC DNA]</scope>
    <source>
        <strain>Welgevonden</strain>
    </source>
</reference>
<proteinExistence type="inferred from homology"/>
<protein>
    <recommendedName>
        <fullName evidence="1">Methionyl-tRNA formyltransferase</fullName>
        <ecNumber evidence="1">2.1.2.9</ecNumber>
    </recommendedName>
</protein>
<organism>
    <name type="scientific">Ehrlichia ruminantium (strain Welgevonden)</name>
    <dbReference type="NCBI Taxonomy" id="254945"/>
    <lineage>
        <taxon>Bacteria</taxon>
        <taxon>Pseudomonadati</taxon>
        <taxon>Pseudomonadota</taxon>
        <taxon>Alphaproteobacteria</taxon>
        <taxon>Rickettsiales</taxon>
        <taxon>Anaplasmataceae</taxon>
        <taxon>Ehrlichia</taxon>
    </lineage>
</organism>
<comment type="function">
    <text evidence="1">Attaches a formyl group to the free amino group of methionyl-tRNA(fMet). The formyl group appears to play a dual role in the initiator identity of N-formylmethionyl-tRNA by promoting its recognition by IF2 and preventing the misappropriation of this tRNA by the elongation apparatus.</text>
</comment>
<comment type="catalytic activity">
    <reaction evidence="1">
        <text>L-methionyl-tRNA(fMet) + (6R)-10-formyltetrahydrofolate = N-formyl-L-methionyl-tRNA(fMet) + (6S)-5,6,7,8-tetrahydrofolate + H(+)</text>
        <dbReference type="Rhea" id="RHEA:24380"/>
        <dbReference type="Rhea" id="RHEA-COMP:9952"/>
        <dbReference type="Rhea" id="RHEA-COMP:9953"/>
        <dbReference type="ChEBI" id="CHEBI:15378"/>
        <dbReference type="ChEBI" id="CHEBI:57453"/>
        <dbReference type="ChEBI" id="CHEBI:78530"/>
        <dbReference type="ChEBI" id="CHEBI:78844"/>
        <dbReference type="ChEBI" id="CHEBI:195366"/>
        <dbReference type="EC" id="2.1.2.9"/>
    </reaction>
</comment>
<comment type="similarity">
    <text evidence="1">Belongs to the Fmt family.</text>
</comment>
<accession>Q5HBX2</accession>
<accession>Q5FD00</accession>
<feature type="chain" id="PRO_0000082963" description="Methionyl-tRNA formyltransferase">
    <location>
        <begin position="1"/>
        <end position="303"/>
    </location>
</feature>
<feature type="binding site" evidence="1">
    <location>
        <begin position="110"/>
        <end position="113"/>
    </location>
    <ligand>
        <name>(6S)-5,6,7,8-tetrahydrofolate</name>
        <dbReference type="ChEBI" id="CHEBI:57453"/>
    </ligand>
</feature>
<name>FMT_EHRRW</name>